<dbReference type="EMBL" id="CP000254">
    <property type="protein sequence ID" value="ABD39912.1"/>
    <property type="molecule type" value="Genomic_DNA"/>
</dbReference>
<dbReference type="RefSeq" id="WP_011447208.1">
    <property type="nucleotide sequence ID" value="NC_007796.1"/>
</dbReference>
<dbReference type="SMR" id="Q2FMZ3"/>
<dbReference type="STRING" id="323259.Mhun_0136"/>
<dbReference type="EnsemblBacteria" id="ABD39912">
    <property type="protein sequence ID" value="ABD39912"/>
    <property type="gene ID" value="Mhun_0136"/>
</dbReference>
<dbReference type="GeneID" id="3924170"/>
<dbReference type="KEGG" id="mhu:Mhun_0136"/>
<dbReference type="eggNOG" id="arCOG04376">
    <property type="taxonomic scope" value="Archaea"/>
</dbReference>
<dbReference type="HOGENOM" id="CLU_074757_0_0_2"/>
<dbReference type="InParanoid" id="Q2FMZ3"/>
<dbReference type="OrthoDB" id="50299at2157"/>
<dbReference type="Proteomes" id="UP000001941">
    <property type="component" value="Chromosome"/>
</dbReference>
<dbReference type="Gene3D" id="3.10.520.10">
    <property type="entry name" value="ApbE-like domains"/>
    <property type="match status" value="1"/>
</dbReference>
<dbReference type="HAMAP" id="MF_01079">
    <property type="entry name" value="UPF0280"/>
    <property type="match status" value="1"/>
</dbReference>
<dbReference type="InterPro" id="IPR003374">
    <property type="entry name" value="ApbE-like_sf"/>
</dbReference>
<dbReference type="InterPro" id="IPR037456">
    <property type="entry name" value="MA1715-like"/>
</dbReference>
<dbReference type="InterPro" id="IPR007183">
    <property type="entry name" value="UPF0280"/>
</dbReference>
<dbReference type="NCBIfam" id="NF003324">
    <property type="entry name" value="PRK04334.1-4"/>
    <property type="match status" value="1"/>
</dbReference>
<dbReference type="PIRSF" id="PIRSF006421">
    <property type="entry name" value="UCP006421"/>
    <property type="match status" value="1"/>
</dbReference>
<dbReference type="SUPFAM" id="SSF143631">
    <property type="entry name" value="ApbE-like"/>
    <property type="match status" value="1"/>
</dbReference>
<accession>Q2FMZ3</accession>
<keyword id="KW-1185">Reference proteome</keyword>
<sequence length="244" mass="26043">MTLRHHFELRETIATILADEELVIETACEGIRTARYELERYIIQDPFFNSSFEPLTITQGPDIIKNMAAAAWKAGVGPMAAVAGAIAHAGVSAAQKKGASFCIIDNGGDIAMITDRPVRVGLYAGNSPLSGKYAFFIPPKNEIYGICTSSATVGHSFSFGTADSVTVFSRDPLLADAVATAVCNVLTIADQSCLDRVDSHIDGIFAVFGEQSIIWGDIPQIIRAENRKDLITAGGLGFFPGTLI</sequence>
<gene>
    <name type="ordered locus">Mhun_0136</name>
</gene>
<name>Y136_METHJ</name>
<comment type="similarity">
    <text evidence="1">Belongs to the UPF0280 family.</text>
</comment>
<reference key="1">
    <citation type="journal article" date="2016" name="Stand. Genomic Sci.">
        <title>Complete genome sequence of Methanospirillum hungatei type strain JF1.</title>
        <authorList>
            <person name="Gunsalus R.P."/>
            <person name="Cook L.E."/>
            <person name="Crable B."/>
            <person name="Rohlin L."/>
            <person name="McDonald E."/>
            <person name="Mouttaki H."/>
            <person name="Sieber J.R."/>
            <person name="Poweleit N."/>
            <person name="Zhou H."/>
            <person name="Lapidus A.L."/>
            <person name="Daligault H.E."/>
            <person name="Land M."/>
            <person name="Gilna P."/>
            <person name="Ivanova N."/>
            <person name="Kyrpides N."/>
            <person name="Culley D.E."/>
            <person name="McInerney M.J."/>
        </authorList>
    </citation>
    <scope>NUCLEOTIDE SEQUENCE [LARGE SCALE GENOMIC DNA]</scope>
    <source>
        <strain>ATCC 27890 / DSM 864 / NBRC 100397 / JF-1</strain>
    </source>
</reference>
<proteinExistence type="inferred from homology"/>
<evidence type="ECO:0000255" key="1">
    <source>
        <dbReference type="HAMAP-Rule" id="MF_01079"/>
    </source>
</evidence>
<organism>
    <name type="scientific">Methanospirillum hungatei JF-1 (strain ATCC 27890 / DSM 864 / NBRC 100397 / JF-1)</name>
    <dbReference type="NCBI Taxonomy" id="323259"/>
    <lineage>
        <taxon>Archaea</taxon>
        <taxon>Methanobacteriati</taxon>
        <taxon>Methanobacteriota</taxon>
        <taxon>Stenosarchaea group</taxon>
        <taxon>Methanomicrobia</taxon>
        <taxon>Methanomicrobiales</taxon>
        <taxon>Methanospirillaceae</taxon>
        <taxon>Methanospirillum</taxon>
    </lineage>
</organism>
<feature type="chain" id="PRO_0000366712" description="UPF0280 protein Mhun_0136">
    <location>
        <begin position="1"/>
        <end position="244"/>
    </location>
</feature>
<protein>
    <recommendedName>
        <fullName evidence="1">UPF0280 protein Mhun_0136</fullName>
    </recommendedName>
</protein>